<comment type="function">
    <text evidence="1">One of the primary rRNA binding proteins, it binds directly near the 3'-end of the 23S rRNA, where it nucleates assembly of the 50S subunit.</text>
</comment>
<comment type="subunit">
    <text evidence="1">Part of the 50S ribosomal subunit. Forms a cluster with proteins L14 and L24e.</text>
</comment>
<comment type="similarity">
    <text evidence="1">Belongs to the universal ribosomal protein uL3 family.</text>
</comment>
<gene>
    <name evidence="1" type="primary">rpl3</name>
    <name type="ordered locus">MK0415</name>
</gene>
<proteinExistence type="inferred from homology"/>
<dbReference type="EMBL" id="AE009439">
    <property type="protein sequence ID" value="AAM01630.1"/>
    <property type="molecule type" value="Genomic_DNA"/>
</dbReference>
<dbReference type="RefSeq" id="WP_011018785.1">
    <property type="nucleotide sequence ID" value="NC_003551.1"/>
</dbReference>
<dbReference type="SMR" id="Q8TY90"/>
<dbReference type="FunCoup" id="Q8TY90">
    <property type="interactions" value="125"/>
</dbReference>
<dbReference type="STRING" id="190192.MK0415"/>
<dbReference type="PaxDb" id="190192-MK0415"/>
<dbReference type="EnsemblBacteria" id="AAM01630">
    <property type="protein sequence ID" value="AAM01630"/>
    <property type="gene ID" value="MK0415"/>
</dbReference>
<dbReference type="GeneID" id="1477718"/>
<dbReference type="KEGG" id="mka:MK0415"/>
<dbReference type="PATRIC" id="fig|190192.8.peg.444"/>
<dbReference type="HOGENOM" id="CLU_033361_2_0_2"/>
<dbReference type="InParanoid" id="Q8TY90"/>
<dbReference type="OrthoDB" id="6121at2157"/>
<dbReference type="Proteomes" id="UP000001826">
    <property type="component" value="Chromosome"/>
</dbReference>
<dbReference type="GO" id="GO:0022625">
    <property type="term" value="C:cytosolic large ribosomal subunit"/>
    <property type="evidence" value="ECO:0007669"/>
    <property type="project" value="TreeGrafter"/>
</dbReference>
<dbReference type="GO" id="GO:0019843">
    <property type="term" value="F:rRNA binding"/>
    <property type="evidence" value="ECO:0007669"/>
    <property type="project" value="UniProtKB-UniRule"/>
</dbReference>
<dbReference type="GO" id="GO:0003735">
    <property type="term" value="F:structural constituent of ribosome"/>
    <property type="evidence" value="ECO:0007669"/>
    <property type="project" value="InterPro"/>
</dbReference>
<dbReference type="GO" id="GO:0006412">
    <property type="term" value="P:translation"/>
    <property type="evidence" value="ECO:0007669"/>
    <property type="project" value="UniProtKB-UniRule"/>
</dbReference>
<dbReference type="Gene3D" id="3.30.1430.10">
    <property type="match status" value="1"/>
</dbReference>
<dbReference type="Gene3D" id="4.10.960.10">
    <property type="entry name" value="Ribosomal protein L3, domain 3"/>
    <property type="match status" value="1"/>
</dbReference>
<dbReference type="Gene3D" id="2.40.30.10">
    <property type="entry name" value="Translation factors"/>
    <property type="match status" value="1"/>
</dbReference>
<dbReference type="HAMAP" id="MF_01325_A">
    <property type="entry name" value="Ribosomal_uL3_A"/>
    <property type="match status" value="1"/>
</dbReference>
<dbReference type="InterPro" id="IPR045077">
    <property type="entry name" value="L3_arc_euk"/>
</dbReference>
<dbReference type="InterPro" id="IPR044892">
    <property type="entry name" value="Ribosomal_L3_dom_3_arc_sf"/>
</dbReference>
<dbReference type="InterPro" id="IPR000597">
    <property type="entry name" value="Ribosomal_uL3"/>
</dbReference>
<dbReference type="InterPro" id="IPR019928">
    <property type="entry name" value="Ribosomal_uL3_arc"/>
</dbReference>
<dbReference type="InterPro" id="IPR019926">
    <property type="entry name" value="Ribosomal_uL3_CS"/>
</dbReference>
<dbReference type="InterPro" id="IPR009000">
    <property type="entry name" value="Transl_B-barrel_sf"/>
</dbReference>
<dbReference type="NCBIfam" id="TIGR03626">
    <property type="entry name" value="L3_arch"/>
    <property type="match status" value="1"/>
</dbReference>
<dbReference type="NCBIfam" id="NF003261">
    <property type="entry name" value="PRK04231.1"/>
    <property type="match status" value="1"/>
</dbReference>
<dbReference type="PANTHER" id="PTHR11363">
    <property type="entry name" value="60S RIBOSOMAL PROTEIN L3-RELATED"/>
    <property type="match status" value="1"/>
</dbReference>
<dbReference type="PANTHER" id="PTHR11363:SF5">
    <property type="entry name" value="LARGE RIBOSOMAL SUBUNIT PROTEIN UL3"/>
    <property type="match status" value="1"/>
</dbReference>
<dbReference type="Pfam" id="PF00297">
    <property type="entry name" value="Ribosomal_L3"/>
    <property type="match status" value="1"/>
</dbReference>
<dbReference type="SUPFAM" id="SSF50447">
    <property type="entry name" value="Translation proteins"/>
    <property type="match status" value="1"/>
</dbReference>
<dbReference type="PROSITE" id="PS00474">
    <property type="entry name" value="RIBOSOMAL_L3"/>
    <property type="match status" value="1"/>
</dbReference>
<accession>Q8TY90</accession>
<reference key="1">
    <citation type="journal article" date="2002" name="Proc. Natl. Acad. Sci. U.S.A.">
        <title>The complete genome of hyperthermophile Methanopyrus kandleri AV19 and monophyly of archaeal methanogens.</title>
        <authorList>
            <person name="Slesarev A.I."/>
            <person name="Mezhevaya K.V."/>
            <person name="Makarova K.S."/>
            <person name="Polushin N.N."/>
            <person name="Shcherbinina O.V."/>
            <person name="Shakhova V.V."/>
            <person name="Belova G.I."/>
            <person name="Aravind L."/>
            <person name="Natale D.A."/>
            <person name="Rogozin I.B."/>
            <person name="Tatusov R.L."/>
            <person name="Wolf Y.I."/>
            <person name="Stetter K.O."/>
            <person name="Malykh A.G."/>
            <person name="Koonin E.V."/>
            <person name="Kozyavkin S.A."/>
        </authorList>
    </citation>
    <scope>NUCLEOTIDE SEQUENCE [LARGE SCALE GENOMIC DNA]</scope>
    <source>
        <strain>AV19 / DSM 6324 / JCM 9639 / NBRC 100938</strain>
    </source>
</reference>
<protein>
    <recommendedName>
        <fullName evidence="1">Large ribosomal subunit protein uL3</fullName>
    </recommendedName>
    <alternativeName>
        <fullName evidence="3">50S ribosomal protein L3</fullName>
    </alternativeName>
</protein>
<evidence type="ECO:0000255" key="1">
    <source>
        <dbReference type="HAMAP-Rule" id="MF_01325"/>
    </source>
</evidence>
<evidence type="ECO:0000256" key="2">
    <source>
        <dbReference type="SAM" id="MobiDB-lite"/>
    </source>
</evidence>
<evidence type="ECO:0000305" key="3"/>
<keyword id="KW-1185">Reference proteome</keyword>
<keyword id="KW-0687">Ribonucleoprotein</keyword>
<keyword id="KW-0689">Ribosomal protein</keyword>
<keyword id="KW-0694">RNA-binding</keyword>
<keyword id="KW-0699">rRNA-binding</keyword>
<name>RL3_METKA</name>
<organism>
    <name type="scientific">Methanopyrus kandleri (strain AV19 / DSM 6324 / JCM 9639 / NBRC 100938)</name>
    <dbReference type="NCBI Taxonomy" id="190192"/>
    <lineage>
        <taxon>Archaea</taxon>
        <taxon>Methanobacteriati</taxon>
        <taxon>Methanobacteriota</taxon>
        <taxon>Methanomada group</taxon>
        <taxon>Methanopyri</taxon>
        <taxon>Methanopyrales</taxon>
        <taxon>Methanopyraceae</taxon>
        <taxon>Methanopyrus</taxon>
    </lineage>
</organism>
<sequence length="361" mass="40166">MGRGGRRNPGRPRRGSLAFSPRKRASRPVPRIRSWPDEERVRVQGFAGYKAGMTHAIMIDDWPNSPTEGEEISVPVTILDAPPMYVAAIRAYAPTPDGYRCVTEAWAEIPEELEMDRVFTVPKDGEAGDLDKIEELVDEGIVEEIRVIVATQPKKAGVPKKKPDVMEYRIGGKDVRERFEYAVEILSEEIRAKDVFDEGEIVDVSAITKGKGFQGVVKRWGVTIQDRKTQRKQKGRHIGSIGPITPSRVRWTVPMAGQVGYHQRTEHNKRILKIGEDGEEVTPRGGFVNYGVVRGDYIMIHGTVPGPKKRLIRVRPAVRPPKNAPEGAPEILYISRTSQQGVRPKASEDEIVEQLGGPASA</sequence>
<feature type="chain" id="PRO_0000077211" description="Large ribosomal subunit protein uL3">
    <location>
        <begin position="1"/>
        <end position="361"/>
    </location>
</feature>
<feature type="region of interest" description="Disordered" evidence="2">
    <location>
        <begin position="1"/>
        <end position="33"/>
    </location>
</feature>
<feature type="region of interest" description="Disordered" evidence="2">
    <location>
        <begin position="337"/>
        <end position="361"/>
    </location>
</feature>
<feature type="compositionally biased region" description="Basic residues" evidence="2">
    <location>
        <begin position="1"/>
        <end position="14"/>
    </location>
</feature>